<proteinExistence type="inferred from homology"/>
<keyword id="KW-0227">DNA damage</keyword>
<keyword id="KW-0234">DNA repair</keyword>
<keyword id="KW-0378">Hydrolase</keyword>
<keyword id="KW-1185">Reference proteome</keyword>
<organism>
    <name type="scientific">Mycolicibacterium paratuberculosis (strain ATCC BAA-968 / K-10)</name>
    <name type="common">Mycobacterium paratuberculosis</name>
    <dbReference type="NCBI Taxonomy" id="262316"/>
    <lineage>
        <taxon>Bacteria</taxon>
        <taxon>Bacillati</taxon>
        <taxon>Actinomycetota</taxon>
        <taxon>Actinomycetes</taxon>
        <taxon>Mycobacteriales</taxon>
        <taxon>Mycobacteriaceae</taxon>
        <taxon>Mycobacterium</taxon>
        <taxon>Mycobacterium avium complex (MAC)</taxon>
    </lineage>
</organism>
<feature type="chain" id="PRO_0000265035" description="Putative 3-methyladenine DNA glycosylase">
    <location>
        <begin position="1"/>
        <end position="205"/>
    </location>
</feature>
<sequence length="205" mass="21538">MRDAAEQLLVDPVEAARRLLGATLTGRGVSGVIVEVEAYGGVPDGPWPDAAAHSYKGLRARNFVMFGPPGRLYTYRSHGIHVCANVSCGPDGTAAAVLLRAAALEDGTDVARGRRGELVHTAALARGPGNLCAAMGITMADNGIDLFDPDSPVTLRLHEPLTAVCGPRVGVSQAADRPWRLWLPGRPEVSAYRRSPRAPAPGTSD</sequence>
<name>3MGH_MYCPA</name>
<accession>Q740F6</accession>
<reference key="1">
    <citation type="journal article" date="2005" name="Proc. Natl. Acad. Sci. U.S.A.">
        <title>The complete genome sequence of Mycobacterium avium subspecies paratuberculosis.</title>
        <authorList>
            <person name="Li L."/>
            <person name="Bannantine J.P."/>
            <person name="Zhang Q."/>
            <person name="Amonsin A."/>
            <person name="May B.J."/>
            <person name="Alt D."/>
            <person name="Banerji N."/>
            <person name="Kanjilal S."/>
            <person name="Kapur V."/>
        </authorList>
    </citation>
    <scope>NUCLEOTIDE SEQUENCE [LARGE SCALE GENOMIC DNA]</scope>
    <source>
        <strain>ATCC BAA-968 / K-10</strain>
    </source>
</reference>
<protein>
    <recommendedName>
        <fullName evidence="1">Putative 3-methyladenine DNA glycosylase</fullName>
        <ecNumber evidence="1">3.2.2.-</ecNumber>
    </recommendedName>
</protein>
<evidence type="ECO:0000255" key="1">
    <source>
        <dbReference type="HAMAP-Rule" id="MF_00527"/>
    </source>
</evidence>
<dbReference type="EC" id="3.2.2.-" evidence="1"/>
<dbReference type="EMBL" id="AE016958">
    <property type="protein sequence ID" value="AAS03712.1"/>
    <property type="molecule type" value="Genomic_DNA"/>
</dbReference>
<dbReference type="SMR" id="Q740F6"/>
<dbReference type="STRING" id="262316.MAP_1395"/>
<dbReference type="KEGG" id="mpa:MAP_1395"/>
<dbReference type="eggNOG" id="COG2094">
    <property type="taxonomic scope" value="Bacteria"/>
</dbReference>
<dbReference type="HOGENOM" id="CLU_060471_3_1_11"/>
<dbReference type="Proteomes" id="UP000000580">
    <property type="component" value="Chromosome"/>
</dbReference>
<dbReference type="GO" id="GO:0003905">
    <property type="term" value="F:alkylbase DNA N-glycosylase activity"/>
    <property type="evidence" value="ECO:0007669"/>
    <property type="project" value="InterPro"/>
</dbReference>
<dbReference type="GO" id="GO:0003677">
    <property type="term" value="F:DNA binding"/>
    <property type="evidence" value="ECO:0007669"/>
    <property type="project" value="InterPro"/>
</dbReference>
<dbReference type="GO" id="GO:0006284">
    <property type="term" value="P:base-excision repair"/>
    <property type="evidence" value="ECO:0007669"/>
    <property type="project" value="InterPro"/>
</dbReference>
<dbReference type="CDD" id="cd00540">
    <property type="entry name" value="AAG"/>
    <property type="match status" value="1"/>
</dbReference>
<dbReference type="Gene3D" id="3.10.300.10">
    <property type="entry name" value="Methylpurine-DNA glycosylase (MPG)"/>
    <property type="match status" value="1"/>
</dbReference>
<dbReference type="HAMAP" id="MF_00527">
    <property type="entry name" value="3MGH"/>
    <property type="match status" value="1"/>
</dbReference>
<dbReference type="InterPro" id="IPR011034">
    <property type="entry name" value="Formyl_transferase-like_C_sf"/>
</dbReference>
<dbReference type="InterPro" id="IPR003180">
    <property type="entry name" value="MPG"/>
</dbReference>
<dbReference type="InterPro" id="IPR036995">
    <property type="entry name" value="MPG_sf"/>
</dbReference>
<dbReference type="NCBIfam" id="TIGR00567">
    <property type="entry name" value="3mg"/>
    <property type="match status" value="1"/>
</dbReference>
<dbReference type="NCBIfam" id="NF002003">
    <property type="entry name" value="PRK00802.1-3"/>
    <property type="match status" value="1"/>
</dbReference>
<dbReference type="PANTHER" id="PTHR10429">
    <property type="entry name" value="DNA-3-METHYLADENINE GLYCOSYLASE"/>
    <property type="match status" value="1"/>
</dbReference>
<dbReference type="PANTHER" id="PTHR10429:SF0">
    <property type="entry name" value="DNA-3-METHYLADENINE GLYCOSYLASE"/>
    <property type="match status" value="1"/>
</dbReference>
<dbReference type="Pfam" id="PF02245">
    <property type="entry name" value="Pur_DNA_glyco"/>
    <property type="match status" value="1"/>
</dbReference>
<dbReference type="SUPFAM" id="SSF50486">
    <property type="entry name" value="FMT C-terminal domain-like"/>
    <property type="match status" value="1"/>
</dbReference>
<gene>
    <name type="ordered locus">MAP_1395</name>
</gene>
<comment type="similarity">
    <text evidence="1">Belongs to the DNA glycosylase MPG family.</text>
</comment>